<name>METF_HAEIN</name>
<proteinExistence type="evidence at protein level"/>
<gene>
    <name type="primary">metF</name>
    <name type="ordered locus">HI_1444</name>
</gene>
<protein>
    <recommendedName>
        <fullName>5,10-methylenetetrahydrofolate reductase</fullName>
        <ecNumber evidence="1">1.5.1.54</ecNumber>
    </recommendedName>
</protein>
<keyword id="KW-0002">3D-structure</keyword>
<keyword id="KW-0028">Amino-acid biosynthesis</keyword>
<keyword id="KW-0274">FAD</keyword>
<keyword id="KW-0285">Flavoprotein</keyword>
<keyword id="KW-0486">Methionine biosynthesis</keyword>
<keyword id="KW-0520">NAD</keyword>
<keyword id="KW-0560">Oxidoreductase</keyword>
<keyword id="KW-1185">Reference proteome</keyword>
<organism>
    <name type="scientific">Haemophilus influenzae (strain ATCC 51907 / DSM 11121 / KW20 / Rd)</name>
    <dbReference type="NCBI Taxonomy" id="71421"/>
    <lineage>
        <taxon>Bacteria</taxon>
        <taxon>Pseudomonadati</taxon>
        <taxon>Pseudomonadota</taxon>
        <taxon>Gammaproteobacteria</taxon>
        <taxon>Pasteurellales</taxon>
        <taxon>Pasteurellaceae</taxon>
        <taxon>Haemophilus</taxon>
    </lineage>
</organism>
<feature type="chain" id="PRO_0000190263" description="5,10-methylenetetrahydrofolate reductase">
    <location>
        <begin position="1"/>
        <end position="292"/>
    </location>
</feature>
<feature type="active site" description="Proton donor/acceptor" evidence="1">
    <location>
        <position position="26"/>
    </location>
</feature>
<feature type="binding site" evidence="1">
    <location>
        <position position="57"/>
    </location>
    <ligand>
        <name>NADH</name>
        <dbReference type="ChEBI" id="CHEBI:57945"/>
    </ligand>
</feature>
<feature type="binding site" evidence="1">
    <location>
        <position position="58"/>
    </location>
    <ligand>
        <name>FAD</name>
        <dbReference type="ChEBI" id="CHEBI:57692"/>
    </ligand>
</feature>
<feature type="binding site" evidence="1">
    <location>
        <position position="60"/>
    </location>
    <ligand>
        <name>FAD</name>
        <dbReference type="ChEBI" id="CHEBI:57692"/>
    </ligand>
</feature>
<feature type="binding site" evidence="1">
    <location>
        <position position="86"/>
    </location>
    <ligand>
        <name>FAD</name>
        <dbReference type="ChEBI" id="CHEBI:57692"/>
    </ligand>
</feature>
<feature type="binding site" evidence="1">
    <location>
        <position position="116"/>
    </location>
    <ligand>
        <name>FAD</name>
        <dbReference type="ChEBI" id="CHEBI:57692"/>
    </ligand>
</feature>
<feature type="binding site" evidence="1">
    <location>
        <position position="117"/>
    </location>
    <ligand>
        <name>FAD</name>
        <dbReference type="ChEBI" id="CHEBI:57692"/>
    </ligand>
</feature>
<feature type="binding site" evidence="1">
    <location>
        <position position="118"/>
    </location>
    <ligand>
        <name>(6S)-5-methyl-5,6,7,8-tetrahydrofolate</name>
        <dbReference type="ChEBI" id="CHEBI:18608"/>
    </ligand>
</feature>
<feature type="binding site" evidence="1">
    <location>
        <position position="118"/>
    </location>
    <ligand>
        <name>FAD</name>
        <dbReference type="ChEBI" id="CHEBI:57692"/>
    </ligand>
</feature>
<feature type="binding site" evidence="1">
    <location>
        <position position="130"/>
    </location>
    <ligand>
        <name>FAD</name>
        <dbReference type="ChEBI" id="CHEBI:57692"/>
    </ligand>
</feature>
<feature type="binding site" evidence="1">
    <location>
        <position position="150"/>
    </location>
    <ligand>
        <name>FAD</name>
        <dbReference type="ChEBI" id="CHEBI:57692"/>
    </ligand>
</feature>
<feature type="binding site" evidence="1">
    <location>
        <position position="154"/>
    </location>
    <ligand>
        <name>FAD</name>
        <dbReference type="ChEBI" id="CHEBI:57692"/>
    </ligand>
</feature>
<feature type="binding site" evidence="1">
    <location>
        <position position="157"/>
    </location>
    <ligand>
        <name>FAD</name>
        <dbReference type="ChEBI" id="CHEBI:57692"/>
    </ligand>
</feature>
<feature type="binding site" evidence="1">
    <location>
        <position position="163"/>
    </location>
    <ligand>
        <name>FAD</name>
        <dbReference type="ChEBI" id="CHEBI:57692"/>
    </ligand>
</feature>
<feature type="binding site" evidence="1">
    <location>
        <position position="166"/>
    </location>
    <ligand>
        <name>FAD</name>
        <dbReference type="ChEBI" id="CHEBI:57692"/>
    </ligand>
</feature>
<feature type="binding site" evidence="1">
    <location>
        <position position="169"/>
    </location>
    <ligand>
        <name>FAD</name>
        <dbReference type="ChEBI" id="CHEBI:57692"/>
    </ligand>
</feature>
<feature type="binding site" evidence="1">
    <location>
        <position position="170"/>
    </location>
    <ligand>
        <name>FAD</name>
        <dbReference type="ChEBI" id="CHEBI:57692"/>
    </ligand>
</feature>
<feature type="binding site" evidence="1">
    <location>
        <position position="181"/>
    </location>
    <ligand>
        <name>(6S)-5-methyl-5,6,7,8-tetrahydrofolate</name>
        <dbReference type="ChEBI" id="CHEBI:18608"/>
    </ligand>
</feature>
<feature type="binding site" evidence="1">
    <location>
        <position position="181"/>
    </location>
    <ligand>
        <name>NADH</name>
        <dbReference type="ChEBI" id="CHEBI:57945"/>
    </ligand>
</feature>
<feature type="binding site" evidence="1">
    <location>
        <position position="217"/>
    </location>
    <ligand>
        <name>(6S)-5-methyl-5,6,7,8-tetrahydrofolate</name>
        <dbReference type="ChEBI" id="CHEBI:18608"/>
    </ligand>
</feature>
<feature type="binding site" evidence="1">
    <location>
        <position position="277"/>
    </location>
    <ligand>
        <name>(6S)-5-methyl-5,6,7,8-tetrahydrofolate</name>
        <dbReference type="ChEBI" id="CHEBI:18608"/>
    </ligand>
</feature>
<feature type="helix" evidence="3">
    <location>
        <begin position="4"/>
        <end position="14"/>
    </location>
</feature>
<feature type="strand" evidence="3">
    <location>
        <begin position="22"/>
        <end position="27"/>
    </location>
</feature>
<feature type="helix" evidence="3">
    <location>
        <begin position="33"/>
        <end position="46"/>
    </location>
</feature>
<feature type="helix" evidence="3">
    <location>
        <begin position="47"/>
        <end position="49"/>
    </location>
</feature>
<feature type="strand" evidence="3">
    <location>
        <begin position="52"/>
        <end position="56"/>
    </location>
</feature>
<feature type="helix" evidence="3">
    <location>
        <begin position="60"/>
        <end position="62"/>
    </location>
</feature>
<feature type="helix" evidence="3">
    <location>
        <begin position="65"/>
        <end position="79"/>
    </location>
</feature>
<feature type="strand" evidence="3">
    <location>
        <begin position="83"/>
        <end position="92"/>
    </location>
</feature>
<feature type="helix" evidence="3">
    <location>
        <begin position="94"/>
        <end position="107"/>
    </location>
</feature>
<feature type="strand" evidence="3">
    <location>
        <begin position="111"/>
        <end position="115"/>
    </location>
</feature>
<feature type="helix" evidence="3">
    <location>
        <begin position="130"/>
        <end position="140"/>
    </location>
</feature>
<feature type="strand" evidence="3">
    <location>
        <begin position="144"/>
        <end position="149"/>
    </location>
</feature>
<feature type="helix" evidence="3">
    <location>
        <begin position="160"/>
        <end position="172"/>
    </location>
</feature>
<feature type="strand" evidence="3">
    <location>
        <begin position="177"/>
        <end position="182"/>
    </location>
</feature>
<feature type="helix" evidence="3">
    <location>
        <begin position="186"/>
        <end position="199"/>
    </location>
</feature>
<feature type="strand" evidence="3">
    <location>
        <begin position="205"/>
        <end position="209"/>
    </location>
</feature>
<feature type="helix" evidence="3">
    <location>
        <begin position="215"/>
        <end position="224"/>
    </location>
</feature>
<feature type="helix" evidence="3">
    <location>
        <begin position="231"/>
        <end position="235"/>
    </location>
</feature>
<feature type="turn" evidence="3">
    <location>
        <begin position="236"/>
        <end position="239"/>
    </location>
</feature>
<feature type="helix" evidence="3">
    <location>
        <begin position="244"/>
        <end position="264"/>
    </location>
</feature>
<feature type="strand" evidence="3">
    <location>
        <begin position="269"/>
        <end position="273"/>
    </location>
</feature>
<feature type="helix" evidence="3">
    <location>
        <begin position="279"/>
        <end position="288"/>
    </location>
</feature>
<comment type="function">
    <text evidence="1">Catalyzes the NADH-dependent reduction of 5,10-methylenetetrahydrofolate to 5-methyltetrahydrofolate. Is required to provide the methyl group necessary for methionine synthetase to convert homocysteine to methionine; the methyl group is given by 5-methyltetrahydrofolate.</text>
</comment>
<comment type="catalytic activity">
    <reaction evidence="1">
        <text>(6S)-5-methyl-5,6,7,8-tetrahydrofolate + NAD(+) = (6R)-5,10-methylene-5,6,7,8-tetrahydrofolate + NADH + H(+)</text>
        <dbReference type="Rhea" id="RHEA:19821"/>
        <dbReference type="ChEBI" id="CHEBI:15378"/>
        <dbReference type="ChEBI" id="CHEBI:15636"/>
        <dbReference type="ChEBI" id="CHEBI:18608"/>
        <dbReference type="ChEBI" id="CHEBI:57540"/>
        <dbReference type="ChEBI" id="CHEBI:57945"/>
        <dbReference type="EC" id="1.5.1.54"/>
    </reaction>
    <physiologicalReaction direction="right-to-left" evidence="1">
        <dbReference type="Rhea" id="RHEA:19823"/>
    </physiologicalReaction>
</comment>
<comment type="cofactor">
    <cofactor evidence="1">
        <name>FAD</name>
        <dbReference type="ChEBI" id="CHEBI:57692"/>
    </cofactor>
</comment>
<comment type="pathway">
    <text>One-carbon metabolism; tetrahydrofolate interconversion.</text>
</comment>
<comment type="pathway">
    <text evidence="1">Amino-acid biosynthesis; L-methionine biosynthesis via de novo pathway.</text>
</comment>
<comment type="similarity">
    <text evidence="2">Belongs to the methylenetetrahydrofolate reductase family.</text>
</comment>
<evidence type="ECO:0000250" key="1">
    <source>
        <dbReference type="UniProtKB" id="P0AEZ1"/>
    </source>
</evidence>
<evidence type="ECO:0000305" key="2"/>
<evidence type="ECO:0007829" key="3">
    <source>
        <dbReference type="PDB" id="5UME"/>
    </source>
</evidence>
<sequence>MSYAKEIDTLNQHIADFNKKINVSFEFFPPKNEKMETLLWDSIHRLKVLKPKFVSVTYGANSGERDRTHGIVKAIKQETGLEAAPHLTGIDATPEELKQIARDYWDSGIRRIVALRGDEPKGYAKKPFYASDLVELLRSVADFDISVAAYPEVHPEAKSAQADLINLKRKIDAGANHVITQFFFDIENYLRFRDRCASIGIDTEIVPGILPVTNFKQLQKMASFTNVKIPAWLVKAYDGLDNDPTTRNLVAASVAMDMVKILSREGVNDFHFYTLNRSELTYAICHMLGVRP</sequence>
<accession>P45208</accession>
<reference key="1">
    <citation type="journal article" date="1995" name="Science">
        <title>Whole-genome random sequencing and assembly of Haemophilus influenzae Rd.</title>
        <authorList>
            <person name="Fleischmann R.D."/>
            <person name="Adams M.D."/>
            <person name="White O."/>
            <person name="Clayton R.A."/>
            <person name="Kirkness E.F."/>
            <person name="Kerlavage A.R."/>
            <person name="Bult C.J."/>
            <person name="Tomb J.-F."/>
            <person name="Dougherty B.A."/>
            <person name="Merrick J.M."/>
            <person name="McKenney K."/>
            <person name="Sutton G.G."/>
            <person name="FitzHugh W."/>
            <person name="Fields C.A."/>
            <person name="Gocayne J.D."/>
            <person name="Scott J.D."/>
            <person name="Shirley R."/>
            <person name="Liu L.-I."/>
            <person name="Glodek A."/>
            <person name="Kelley J.M."/>
            <person name="Weidman J.F."/>
            <person name="Phillips C.A."/>
            <person name="Spriggs T."/>
            <person name="Hedblom E."/>
            <person name="Cotton M.D."/>
            <person name="Utterback T.R."/>
            <person name="Hanna M.C."/>
            <person name="Nguyen D.T."/>
            <person name="Saudek D.M."/>
            <person name="Brandon R.C."/>
            <person name="Fine L.D."/>
            <person name="Fritchman J.L."/>
            <person name="Fuhrmann J.L."/>
            <person name="Geoghagen N.S.M."/>
            <person name="Gnehm C.L."/>
            <person name="McDonald L.A."/>
            <person name="Small K.V."/>
            <person name="Fraser C.M."/>
            <person name="Smith H.O."/>
            <person name="Venter J.C."/>
        </authorList>
    </citation>
    <scope>NUCLEOTIDE SEQUENCE [LARGE SCALE GENOMIC DNA]</scope>
    <source>
        <strain>ATCC 51907 / DSM 11121 / KW20 / Rd</strain>
    </source>
</reference>
<dbReference type="EC" id="1.5.1.54" evidence="1"/>
<dbReference type="EMBL" id="L42023">
    <property type="protein sequence ID" value="AAC23094.1"/>
    <property type="molecule type" value="Genomic_DNA"/>
</dbReference>
<dbReference type="PIR" id="H64123">
    <property type="entry name" value="H64123"/>
</dbReference>
<dbReference type="RefSeq" id="NP_439596.1">
    <property type="nucleotide sequence ID" value="NC_000907.1"/>
</dbReference>
<dbReference type="PDB" id="5UME">
    <property type="method" value="X-ray"/>
    <property type="resolution" value="2.70 A"/>
    <property type="chains" value="A/B/C/D/E/F=1-292"/>
</dbReference>
<dbReference type="PDBsum" id="5UME"/>
<dbReference type="SMR" id="P45208"/>
<dbReference type="STRING" id="71421.HI_1444"/>
<dbReference type="EnsemblBacteria" id="AAC23094">
    <property type="protein sequence ID" value="AAC23094"/>
    <property type="gene ID" value="HI_1444"/>
</dbReference>
<dbReference type="KEGG" id="hin:HI_1444"/>
<dbReference type="PATRIC" id="fig|71421.8.peg.1506"/>
<dbReference type="eggNOG" id="COG0685">
    <property type="taxonomic scope" value="Bacteria"/>
</dbReference>
<dbReference type="HOGENOM" id="CLU_025841_0_0_6"/>
<dbReference type="OrthoDB" id="9812555at2"/>
<dbReference type="PhylomeDB" id="P45208"/>
<dbReference type="BioCyc" id="HINF71421:G1GJ1-1470-MONOMER"/>
<dbReference type="UniPathway" id="UPA00051"/>
<dbReference type="UniPathway" id="UPA00193"/>
<dbReference type="Proteomes" id="UP000000579">
    <property type="component" value="Chromosome"/>
</dbReference>
<dbReference type="GO" id="GO:0005829">
    <property type="term" value="C:cytosol"/>
    <property type="evidence" value="ECO:0007669"/>
    <property type="project" value="InterPro"/>
</dbReference>
<dbReference type="GO" id="GO:0071949">
    <property type="term" value="F:FAD binding"/>
    <property type="evidence" value="ECO:0000318"/>
    <property type="project" value="GO_Central"/>
</dbReference>
<dbReference type="GO" id="GO:0004489">
    <property type="term" value="F:methylenetetrahydrofolate reductase (NAD(P)H) activity"/>
    <property type="evidence" value="ECO:0000318"/>
    <property type="project" value="GO_Central"/>
</dbReference>
<dbReference type="GO" id="GO:0106312">
    <property type="term" value="F:methylenetetrahydrofolate reductase (NADH) activity"/>
    <property type="evidence" value="ECO:0007669"/>
    <property type="project" value="RHEA"/>
</dbReference>
<dbReference type="GO" id="GO:0009086">
    <property type="term" value="P:methionine biosynthetic process"/>
    <property type="evidence" value="ECO:0000318"/>
    <property type="project" value="GO_Central"/>
</dbReference>
<dbReference type="GO" id="GO:0035999">
    <property type="term" value="P:tetrahydrofolate interconversion"/>
    <property type="evidence" value="ECO:0000318"/>
    <property type="project" value="GO_Central"/>
</dbReference>
<dbReference type="CDD" id="cd00537">
    <property type="entry name" value="MTHFR"/>
    <property type="match status" value="1"/>
</dbReference>
<dbReference type="FunFam" id="3.20.20.220:FF:000001">
    <property type="entry name" value="Methylenetetrahydrofolate reductase"/>
    <property type="match status" value="1"/>
</dbReference>
<dbReference type="Gene3D" id="3.20.20.220">
    <property type="match status" value="1"/>
</dbReference>
<dbReference type="InterPro" id="IPR029041">
    <property type="entry name" value="FAD-linked_oxidoreductase-like"/>
</dbReference>
<dbReference type="InterPro" id="IPR003171">
    <property type="entry name" value="Mehydrof_redctse-like"/>
</dbReference>
<dbReference type="InterPro" id="IPR004620">
    <property type="entry name" value="MTHF_reductase_bac"/>
</dbReference>
<dbReference type="NCBIfam" id="TIGR00676">
    <property type="entry name" value="fadh2"/>
    <property type="match status" value="1"/>
</dbReference>
<dbReference type="NCBIfam" id="NF006950">
    <property type="entry name" value="PRK09432.1"/>
    <property type="match status" value="1"/>
</dbReference>
<dbReference type="PANTHER" id="PTHR45754">
    <property type="entry name" value="METHYLENETETRAHYDROFOLATE REDUCTASE"/>
    <property type="match status" value="1"/>
</dbReference>
<dbReference type="PANTHER" id="PTHR45754:SF3">
    <property type="entry name" value="METHYLENETETRAHYDROFOLATE REDUCTASE (NADPH)"/>
    <property type="match status" value="1"/>
</dbReference>
<dbReference type="Pfam" id="PF02219">
    <property type="entry name" value="MTHFR"/>
    <property type="match status" value="1"/>
</dbReference>
<dbReference type="SUPFAM" id="SSF51730">
    <property type="entry name" value="FAD-linked oxidoreductase"/>
    <property type="match status" value="1"/>
</dbReference>